<comment type="function">
    <text>Cytochromes P450 are a group of heme-thiolate monooxygenases. In liver microsomes, this enzyme is involved in an NADPH-dependent electron transport pathway. It oxidizes a variety of structurally unrelated compounds, including steroids, fatty acids, and xenobiotics.</text>
</comment>
<comment type="catalytic activity">
    <reaction>
        <text>an organic molecule + reduced [NADPH--hemoprotein reductase] + O2 = an alcohol + oxidized [NADPH--hemoprotein reductase] + H2O + H(+)</text>
        <dbReference type="Rhea" id="RHEA:17149"/>
        <dbReference type="Rhea" id="RHEA-COMP:11964"/>
        <dbReference type="Rhea" id="RHEA-COMP:11965"/>
        <dbReference type="ChEBI" id="CHEBI:15377"/>
        <dbReference type="ChEBI" id="CHEBI:15378"/>
        <dbReference type="ChEBI" id="CHEBI:15379"/>
        <dbReference type="ChEBI" id="CHEBI:30879"/>
        <dbReference type="ChEBI" id="CHEBI:57618"/>
        <dbReference type="ChEBI" id="CHEBI:58210"/>
        <dbReference type="ChEBI" id="CHEBI:142491"/>
        <dbReference type="EC" id="1.14.14.1"/>
    </reaction>
</comment>
<comment type="cofactor">
    <cofactor evidence="1">
        <name>heme</name>
        <dbReference type="ChEBI" id="CHEBI:30413"/>
    </cofactor>
</comment>
<comment type="subcellular location">
    <subcellularLocation>
        <location>Endoplasmic reticulum membrane</location>
        <topology>Peripheral membrane protein</topology>
    </subcellularLocation>
    <subcellularLocation>
        <location>Microsome membrane</location>
        <topology>Peripheral membrane protein</topology>
    </subcellularLocation>
</comment>
<comment type="induction">
    <text>P450 can be induced to high levels in liver and other tissues by various foreign compounds, including drugs, pesticides, and carcinogens.</text>
</comment>
<comment type="similarity">
    <text evidence="2">Belongs to the cytochrome P450 family.</text>
</comment>
<accession>P17666</accession>
<feature type="chain" id="PRO_0000051704" description="Cytochrome P450 2C14">
    <location>
        <begin position="1"/>
        <end position="490"/>
    </location>
</feature>
<feature type="binding site" description="axial binding residue">
    <location>
        <position position="435"/>
    </location>
    <ligand>
        <name>heme</name>
        <dbReference type="ChEBI" id="CHEBI:30413"/>
    </ligand>
    <ligandPart>
        <name>Fe</name>
        <dbReference type="ChEBI" id="CHEBI:18248"/>
    </ligandPart>
</feature>
<protein>
    <recommendedName>
        <fullName>Cytochrome P450 2C14</fullName>
        <ecNumber>1.14.14.1</ecNumber>
    </recommendedName>
    <alternativeName>
        <fullName>CYPIIC14</fullName>
    </alternativeName>
    <alternativeName>
        <fullName>Cytochrome P450 PHP3</fullName>
    </alternativeName>
</protein>
<evidence type="ECO:0000250" key="1"/>
<evidence type="ECO:0000305" key="2"/>
<name>CP2CE_RABIT</name>
<sequence length="490" mass="55721">MDPVVVLVLCLSCLLLLSLWKQSHGGGKLPPGPTPLPILGNILQIDFKDISKSLQNLSKVYGNVFTVYMGMKPTVVMYGYEAVKEALVDLGEEFSGRNLSPINKKVNKGLGVIFSNGKRWKEIRRFSLMTLRNFGMGKRSIEDRVQEEARCLVEELRKTNGSPCDPTFILGAAPCNVICSVIFQNRFDYKDETFLNLMGKFNENFRILNSPWLQVCNIFPILMDYLPGTHKTVFENFDYVRNFVLEKTKEHQESLDINNPRDFIDCFLIKMKQEKHNQQSEFTIENLMATVTDVFAAGTETTSTTLRYGLLLLMKHPEVTAKVQEEIERVIGRHRSPCMQDRSRMPYTDATVHEIQRYINLVPNNVPHATTCNVKFRNYFIPKGTAVLTSLTSVLHDNQEFLKPDKFDPGHFLDASGNFKKSDYFMPFSTGKRVCMGEALARMELFLFLTAILQNFTLKPLVDPKDIDTTPLVSGARSCATLYQLSFIPA</sequence>
<proteinExistence type="evidence at transcript level"/>
<organism>
    <name type="scientific">Oryctolagus cuniculus</name>
    <name type="common">Rabbit</name>
    <dbReference type="NCBI Taxonomy" id="9986"/>
    <lineage>
        <taxon>Eukaryota</taxon>
        <taxon>Metazoa</taxon>
        <taxon>Chordata</taxon>
        <taxon>Craniata</taxon>
        <taxon>Vertebrata</taxon>
        <taxon>Euteleostomi</taxon>
        <taxon>Mammalia</taxon>
        <taxon>Eutheria</taxon>
        <taxon>Euarchontoglires</taxon>
        <taxon>Glires</taxon>
        <taxon>Lagomorpha</taxon>
        <taxon>Leporidae</taxon>
        <taxon>Oryctolagus</taxon>
    </lineage>
</organism>
<dbReference type="EC" id="1.14.14.1"/>
<dbReference type="EMBL" id="D00190">
    <property type="protein sequence ID" value="BAA00130.1"/>
    <property type="molecule type" value="mRNA"/>
</dbReference>
<dbReference type="PIR" id="A26921">
    <property type="entry name" value="A26921"/>
</dbReference>
<dbReference type="RefSeq" id="NP_001164591.1">
    <property type="nucleotide sequence ID" value="NM_001171120.1"/>
</dbReference>
<dbReference type="SMR" id="P17666"/>
<dbReference type="FunCoup" id="P17666">
    <property type="interactions" value="247"/>
</dbReference>
<dbReference type="PaxDb" id="9986-ENSOCUP00000020330"/>
<dbReference type="GeneID" id="100328936"/>
<dbReference type="KEGG" id="ocu:100328936"/>
<dbReference type="CTD" id="100328936"/>
<dbReference type="eggNOG" id="KOG0156">
    <property type="taxonomic scope" value="Eukaryota"/>
</dbReference>
<dbReference type="InParanoid" id="P17666"/>
<dbReference type="OrthoDB" id="1103324at2759"/>
<dbReference type="Proteomes" id="UP000001811">
    <property type="component" value="Unplaced"/>
</dbReference>
<dbReference type="GO" id="GO:0005789">
    <property type="term" value="C:endoplasmic reticulum membrane"/>
    <property type="evidence" value="ECO:0007669"/>
    <property type="project" value="UniProtKB-SubCell"/>
</dbReference>
<dbReference type="GO" id="GO:0020037">
    <property type="term" value="F:heme binding"/>
    <property type="evidence" value="ECO:0007669"/>
    <property type="project" value="InterPro"/>
</dbReference>
<dbReference type="GO" id="GO:0005506">
    <property type="term" value="F:iron ion binding"/>
    <property type="evidence" value="ECO:0007669"/>
    <property type="project" value="InterPro"/>
</dbReference>
<dbReference type="GO" id="GO:0016712">
    <property type="term" value="F:oxidoreductase activity, acting on paired donors, with incorporation or reduction of molecular oxygen, reduced flavin or flavoprotein as one donor, and incorporation of one atom of oxygen"/>
    <property type="evidence" value="ECO:0007669"/>
    <property type="project" value="UniProtKB-EC"/>
</dbReference>
<dbReference type="GO" id="GO:0006082">
    <property type="term" value="P:organic acid metabolic process"/>
    <property type="evidence" value="ECO:0007669"/>
    <property type="project" value="TreeGrafter"/>
</dbReference>
<dbReference type="GO" id="GO:0006805">
    <property type="term" value="P:xenobiotic metabolic process"/>
    <property type="evidence" value="ECO:0007669"/>
    <property type="project" value="TreeGrafter"/>
</dbReference>
<dbReference type="CDD" id="cd20665">
    <property type="entry name" value="CYP2C-like"/>
    <property type="match status" value="1"/>
</dbReference>
<dbReference type="FunFam" id="1.10.630.10:FF:000299">
    <property type="entry name" value="Cytochrome P450 2C9"/>
    <property type="match status" value="1"/>
</dbReference>
<dbReference type="Gene3D" id="1.10.630.10">
    <property type="entry name" value="Cytochrome P450"/>
    <property type="match status" value="1"/>
</dbReference>
<dbReference type="InterPro" id="IPR001128">
    <property type="entry name" value="Cyt_P450"/>
</dbReference>
<dbReference type="InterPro" id="IPR017972">
    <property type="entry name" value="Cyt_P450_CS"/>
</dbReference>
<dbReference type="InterPro" id="IPR002401">
    <property type="entry name" value="Cyt_P450_E_grp-I"/>
</dbReference>
<dbReference type="InterPro" id="IPR036396">
    <property type="entry name" value="Cyt_P450_sf"/>
</dbReference>
<dbReference type="InterPro" id="IPR050182">
    <property type="entry name" value="Cytochrome_P450_fam2"/>
</dbReference>
<dbReference type="PANTHER" id="PTHR24300:SF423">
    <property type="entry name" value="CYTOCHROME P450 2C18"/>
    <property type="match status" value="1"/>
</dbReference>
<dbReference type="PANTHER" id="PTHR24300">
    <property type="entry name" value="CYTOCHROME P450 508A4-RELATED"/>
    <property type="match status" value="1"/>
</dbReference>
<dbReference type="Pfam" id="PF00067">
    <property type="entry name" value="p450"/>
    <property type="match status" value="1"/>
</dbReference>
<dbReference type="PRINTS" id="PR00463">
    <property type="entry name" value="EP450I"/>
</dbReference>
<dbReference type="PRINTS" id="PR00385">
    <property type="entry name" value="P450"/>
</dbReference>
<dbReference type="SUPFAM" id="SSF48264">
    <property type="entry name" value="Cytochrome P450"/>
    <property type="match status" value="1"/>
</dbReference>
<dbReference type="PROSITE" id="PS00086">
    <property type="entry name" value="CYTOCHROME_P450"/>
    <property type="match status" value="1"/>
</dbReference>
<gene>
    <name type="primary">CYP2C14</name>
</gene>
<reference key="1">
    <citation type="journal article" date="1987" name="J. Biochem.">
        <title>Cytochrome P-450 related to P-4504 from phenobarbital-treated rabbit liver: molecular cloning of cDNA and characterization of cytochrome P-450 obtained by its expression in yeast cells.</title>
        <authorList>
            <person name="Imai Y."/>
        </authorList>
    </citation>
    <scope>NUCLEOTIDE SEQUENCE [MRNA]</scope>
</reference>
<keyword id="KW-0256">Endoplasmic reticulum</keyword>
<keyword id="KW-0349">Heme</keyword>
<keyword id="KW-0408">Iron</keyword>
<keyword id="KW-0472">Membrane</keyword>
<keyword id="KW-0479">Metal-binding</keyword>
<keyword id="KW-0492">Microsome</keyword>
<keyword id="KW-0503">Monooxygenase</keyword>
<keyword id="KW-0560">Oxidoreductase</keyword>
<keyword id="KW-1185">Reference proteome</keyword>